<feature type="chain" id="PRO_1000023068" description="UDP-N-acetylglucosamine 1-carboxyvinyltransferase">
    <location>
        <begin position="1"/>
        <end position="458"/>
    </location>
</feature>
<feature type="active site" description="Proton donor" evidence="1">
    <location>
        <position position="128"/>
    </location>
</feature>
<feature type="binding site" evidence="1">
    <location>
        <begin position="34"/>
        <end position="35"/>
    </location>
    <ligand>
        <name>phosphoenolpyruvate</name>
        <dbReference type="ChEBI" id="CHEBI:58702"/>
    </ligand>
</feature>
<feature type="binding site" evidence="1">
    <location>
        <position position="104"/>
    </location>
    <ligand>
        <name>UDP-N-acetyl-alpha-D-glucosamine</name>
        <dbReference type="ChEBI" id="CHEBI:57705"/>
    </ligand>
</feature>
<feature type="binding site" evidence="1">
    <location>
        <position position="319"/>
    </location>
    <ligand>
        <name>UDP-N-acetyl-alpha-D-glucosamine</name>
        <dbReference type="ChEBI" id="CHEBI:57705"/>
    </ligand>
</feature>
<feature type="binding site" evidence="1">
    <location>
        <position position="341"/>
    </location>
    <ligand>
        <name>UDP-N-acetyl-alpha-D-glucosamine</name>
        <dbReference type="ChEBI" id="CHEBI:57705"/>
    </ligand>
</feature>
<feature type="modified residue" description="2-(S-cysteinyl)pyruvic acid O-phosphothioketal" evidence="1">
    <location>
        <position position="128"/>
    </location>
</feature>
<accession>A2BY07</accession>
<keyword id="KW-0131">Cell cycle</keyword>
<keyword id="KW-0132">Cell division</keyword>
<keyword id="KW-0133">Cell shape</keyword>
<keyword id="KW-0961">Cell wall biogenesis/degradation</keyword>
<keyword id="KW-0963">Cytoplasm</keyword>
<keyword id="KW-0573">Peptidoglycan synthesis</keyword>
<keyword id="KW-0670">Pyruvate</keyword>
<keyword id="KW-0808">Transferase</keyword>
<proteinExistence type="inferred from homology"/>
<gene>
    <name evidence="1" type="primary">murA</name>
    <name type="ordered locus">P9515_14611</name>
</gene>
<protein>
    <recommendedName>
        <fullName evidence="1">UDP-N-acetylglucosamine 1-carboxyvinyltransferase</fullName>
        <ecNumber evidence="1">2.5.1.7</ecNumber>
    </recommendedName>
    <alternativeName>
        <fullName evidence="1">Enoylpyruvate transferase</fullName>
    </alternativeName>
    <alternativeName>
        <fullName evidence="1">UDP-N-acetylglucosamine enolpyruvyl transferase</fullName>
        <shortName evidence="1">EPT</shortName>
    </alternativeName>
</protein>
<comment type="function">
    <text evidence="1">Cell wall formation. Adds enolpyruvyl to UDP-N-acetylglucosamine.</text>
</comment>
<comment type="catalytic activity">
    <reaction evidence="1">
        <text>phosphoenolpyruvate + UDP-N-acetyl-alpha-D-glucosamine = UDP-N-acetyl-3-O-(1-carboxyvinyl)-alpha-D-glucosamine + phosphate</text>
        <dbReference type="Rhea" id="RHEA:18681"/>
        <dbReference type="ChEBI" id="CHEBI:43474"/>
        <dbReference type="ChEBI" id="CHEBI:57705"/>
        <dbReference type="ChEBI" id="CHEBI:58702"/>
        <dbReference type="ChEBI" id="CHEBI:68483"/>
        <dbReference type="EC" id="2.5.1.7"/>
    </reaction>
</comment>
<comment type="pathway">
    <text evidence="1">Cell wall biogenesis; peptidoglycan biosynthesis.</text>
</comment>
<comment type="subcellular location">
    <subcellularLocation>
        <location evidence="1">Cytoplasm</location>
    </subcellularLocation>
</comment>
<comment type="similarity">
    <text evidence="1">Belongs to the EPSP synthase family. MurA subfamily.</text>
</comment>
<dbReference type="EC" id="2.5.1.7" evidence="1"/>
<dbReference type="EMBL" id="CP000552">
    <property type="protein sequence ID" value="ABM72668.1"/>
    <property type="molecule type" value="Genomic_DNA"/>
</dbReference>
<dbReference type="RefSeq" id="WP_011820765.1">
    <property type="nucleotide sequence ID" value="NC_008817.1"/>
</dbReference>
<dbReference type="SMR" id="A2BY07"/>
<dbReference type="STRING" id="167542.P9515_14611"/>
<dbReference type="GeneID" id="60201931"/>
<dbReference type="KEGG" id="pmc:P9515_14611"/>
<dbReference type="eggNOG" id="COG0766">
    <property type="taxonomic scope" value="Bacteria"/>
</dbReference>
<dbReference type="HOGENOM" id="CLU_027387_0_0_3"/>
<dbReference type="OrthoDB" id="9803760at2"/>
<dbReference type="UniPathway" id="UPA00219"/>
<dbReference type="Proteomes" id="UP000001589">
    <property type="component" value="Chromosome"/>
</dbReference>
<dbReference type="GO" id="GO:0005737">
    <property type="term" value="C:cytoplasm"/>
    <property type="evidence" value="ECO:0007669"/>
    <property type="project" value="UniProtKB-SubCell"/>
</dbReference>
<dbReference type="GO" id="GO:0008760">
    <property type="term" value="F:UDP-N-acetylglucosamine 1-carboxyvinyltransferase activity"/>
    <property type="evidence" value="ECO:0007669"/>
    <property type="project" value="UniProtKB-UniRule"/>
</dbReference>
<dbReference type="GO" id="GO:0051301">
    <property type="term" value="P:cell division"/>
    <property type="evidence" value="ECO:0007669"/>
    <property type="project" value="UniProtKB-KW"/>
</dbReference>
<dbReference type="GO" id="GO:0071555">
    <property type="term" value="P:cell wall organization"/>
    <property type="evidence" value="ECO:0007669"/>
    <property type="project" value="UniProtKB-KW"/>
</dbReference>
<dbReference type="GO" id="GO:0009252">
    <property type="term" value="P:peptidoglycan biosynthetic process"/>
    <property type="evidence" value="ECO:0007669"/>
    <property type="project" value="UniProtKB-UniRule"/>
</dbReference>
<dbReference type="GO" id="GO:0008360">
    <property type="term" value="P:regulation of cell shape"/>
    <property type="evidence" value="ECO:0007669"/>
    <property type="project" value="UniProtKB-KW"/>
</dbReference>
<dbReference type="GO" id="GO:0019277">
    <property type="term" value="P:UDP-N-acetylgalactosamine biosynthetic process"/>
    <property type="evidence" value="ECO:0007669"/>
    <property type="project" value="InterPro"/>
</dbReference>
<dbReference type="CDD" id="cd01555">
    <property type="entry name" value="UdpNAET"/>
    <property type="match status" value="1"/>
</dbReference>
<dbReference type="FunFam" id="3.65.10.10:FF:000001">
    <property type="entry name" value="UDP-N-acetylglucosamine 1-carboxyvinyltransferase"/>
    <property type="match status" value="1"/>
</dbReference>
<dbReference type="Gene3D" id="3.65.10.10">
    <property type="entry name" value="Enolpyruvate transferase domain"/>
    <property type="match status" value="2"/>
</dbReference>
<dbReference type="HAMAP" id="MF_00111">
    <property type="entry name" value="MurA"/>
    <property type="match status" value="1"/>
</dbReference>
<dbReference type="InterPro" id="IPR001986">
    <property type="entry name" value="Enolpyruvate_Tfrase_dom"/>
</dbReference>
<dbReference type="InterPro" id="IPR036968">
    <property type="entry name" value="Enolpyruvate_Tfrase_sf"/>
</dbReference>
<dbReference type="InterPro" id="IPR050068">
    <property type="entry name" value="MurA_subfamily"/>
</dbReference>
<dbReference type="InterPro" id="IPR013792">
    <property type="entry name" value="RNA3'P_cycl/enolpyr_Trfase_a/b"/>
</dbReference>
<dbReference type="InterPro" id="IPR005750">
    <property type="entry name" value="UDP_GlcNAc_COvinyl_MurA"/>
</dbReference>
<dbReference type="NCBIfam" id="TIGR01072">
    <property type="entry name" value="murA"/>
    <property type="match status" value="1"/>
</dbReference>
<dbReference type="NCBIfam" id="NF006873">
    <property type="entry name" value="PRK09369.1"/>
    <property type="match status" value="1"/>
</dbReference>
<dbReference type="PANTHER" id="PTHR43783">
    <property type="entry name" value="UDP-N-ACETYLGLUCOSAMINE 1-CARBOXYVINYLTRANSFERASE"/>
    <property type="match status" value="1"/>
</dbReference>
<dbReference type="PANTHER" id="PTHR43783:SF1">
    <property type="entry name" value="UDP-N-ACETYLGLUCOSAMINE 1-CARBOXYVINYLTRANSFERASE"/>
    <property type="match status" value="1"/>
</dbReference>
<dbReference type="Pfam" id="PF00275">
    <property type="entry name" value="EPSP_synthase"/>
    <property type="match status" value="1"/>
</dbReference>
<dbReference type="SUPFAM" id="SSF55205">
    <property type="entry name" value="EPT/RTPC-like"/>
    <property type="match status" value="1"/>
</dbReference>
<evidence type="ECO:0000255" key="1">
    <source>
        <dbReference type="HAMAP-Rule" id="MF_00111"/>
    </source>
</evidence>
<reference key="1">
    <citation type="journal article" date="2007" name="PLoS Genet.">
        <title>Patterns and implications of gene gain and loss in the evolution of Prochlorococcus.</title>
        <authorList>
            <person name="Kettler G.C."/>
            <person name="Martiny A.C."/>
            <person name="Huang K."/>
            <person name="Zucker J."/>
            <person name="Coleman M.L."/>
            <person name="Rodrigue S."/>
            <person name="Chen F."/>
            <person name="Lapidus A."/>
            <person name="Ferriera S."/>
            <person name="Johnson J."/>
            <person name="Steglich C."/>
            <person name="Church G.M."/>
            <person name="Richardson P."/>
            <person name="Chisholm S.W."/>
        </authorList>
    </citation>
    <scope>NUCLEOTIDE SEQUENCE [LARGE SCALE GENOMIC DNA]</scope>
    <source>
        <strain>MIT 9515</strain>
    </source>
</reference>
<sequence>MVCESNNKSYLKSQNLKIIGKNSLRGNVKISGAKNSALVLLAASLLTDEKIILDNVPLLTDIEKMGNILKNLGVKLHNKDHQLIIDSKNISIQELPYELVNGLRASFFCIGALLTRFGKASLPLPGGCNIGERPINEHINGLRALGAEIIIEKEVVKAKLIKKKSKLFGANIRLNCPSVGATETLIMAASLAEGRTIIENAAREPEIQDLCQMLNKMGAKIYGAGKEKIIIDGVQKLHGCSHKVIPDRIEAGTFLIAAAATSSSITISPVIPNHLEAVLNKLEESGSKIEKKGNSISISGKSIKAVKIKTAPFPGFPTDLQAPFMALMTIAKGTSMISERIFENRMHHVNLLNQMGAAITVDDNTAIINGVKKLKGMNLVGSDLRSSAALIIAALISENISHIYGLEHLDRGYENFEFKLTKLGAKIIREVDGGIQTKSKNSSEIHPTKNLDINFNVA</sequence>
<name>MURA_PROM5</name>
<organism>
    <name type="scientific">Prochlorococcus marinus (strain MIT 9515)</name>
    <dbReference type="NCBI Taxonomy" id="167542"/>
    <lineage>
        <taxon>Bacteria</taxon>
        <taxon>Bacillati</taxon>
        <taxon>Cyanobacteriota</taxon>
        <taxon>Cyanophyceae</taxon>
        <taxon>Synechococcales</taxon>
        <taxon>Prochlorococcaceae</taxon>
        <taxon>Prochlorococcus</taxon>
    </lineage>
</organism>